<reference key="1">
    <citation type="submission" date="2000-11" db="EMBL/GenBank/DDBJ databases">
        <title>Mouse neuronal pentraxin 2 gene.</title>
        <authorList>
            <person name="Perin M.S."/>
        </authorList>
    </citation>
    <scope>NUCLEOTIDE SEQUENCE [GENOMIC DNA]</scope>
    <source>
        <strain>129/SvJ</strain>
    </source>
</reference>
<reference key="2">
    <citation type="journal article" date="2004" name="Genome Res.">
        <title>The status, quality, and expansion of the NIH full-length cDNA project: the Mammalian Gene Collection (MGC).</title>
        <authorList>
            <consortium name="The MGC Project Team"/>
        </authorList>
    </citation>
    <scope>NUCLEOTIDE SEQUENCE [LARGE SCALE MRNA]</scope>
    <source>
        <strain>C57BL/6J</strain>
        <tissue>Mammary gland</tissue>
    </source>
</reference>
<sequence length="429" mass="47137">MLALLTVGVALAVAAGRAQDSPIPGSRFVCTALPPEAARAGCPLPAMPMQGGALSPEEELRAAVLQLRETVVQQKETLGAQREAIRELTGKLARCEGLAGGKARGTGKDTMGDLPRDPGHVVEQLSRSLQTLKDRLESLELQLRTNVSNAGLPSDFREVLQRRLGELERQLLRKVAELEDEKSLLHNETSAHRQKTESTLNALLQRVTELERGNSAFKSPDAFKVSLPLRTNYLYGKIKKTLPELYAFTICLWLRSSASPGIGTPFSYAVPGQANEIVLIEWGNNPIELLINDKVAQLPLFVSDGKWHHICITWTTRDGMWEAFQDGEKLGTGENLAPWHPIKPGGVLILGQEQDTVGGRFDATQAFVGELSQFNIWDRVLRAQEIINIANCSTNMPGNIIPWVDNNVDVFGGASKWPVETCEERLLDL</sequence>
<proteinExistence type="evidence at protein level"/>
<accession>O70340</accession>
<evidence type="ECO:0000250" key="1"/>
<evidence type="ECO:0000255" key="2"/>
<evidence type="ECO:0000255" key="3">
    <source>
        <dbReference type="PROSITE-ProRule" id="PRU01172"/>
    </source>
</evidence>
<comment type="function">
    <text evidence="1">Likely to play role in the modification of cellular properties that underlie long-term plasticity. Binds to agar matrix in a calcium-dependent manner (By similarity).</text>
</comment>
<comment type="cofactor">
    <cofactor evidence="1">
        <name>Ca(2+)</name>
        <dbReference type="ChEBI" id="CHEBI:29108"/>
    </cofactor>
    <text evidence="1">Binds 2 calcium ions per subunit.</text>
</comment>
<comment type="subunit">
    <text evidence="1">Homooligomer or heterooligomer (probably pentamer) with neuronal pentraxin receptor (NPTXR).</text>
</comment>
<comment type="interaction">
    <interactant intactId="EBI-26472905">
        <id>O70340</id>
    </interactant>
    <interactant intactId="EBI-445497">
        <id>Q9Z2W8</id>
        <label>Gria4</label>
    </interactant>
    <organismsDiffer>false</organismsDiffer>
    <experiments>2</experiments>
</comment>
<comment type="subcellular location">
    <subcellularLocation>
        <location evidence="1">Secreted</location>
    </subcellularLocation>
</comment>
<organism>
    <name type="scientific">Mus musculus</name>
    <name type="common">Mouse</name>
    <dbReference type="NCBI Taxonomy" id="10090"/>
    <lineage>
        <taxon>Eukaryota</taxon>
        <taxon>Metazoa</taxon>
        <taxon>Chordata</taxon>
        <taxon>Craniata</taxon>
        <taxon>Vertebrata</taxon>
        <taxon>Euteleostomi</taxon>
        <taxon>Mammalia</taxon>
        <taxon>Eutheria</taxon>
        <taxon>Euarchontoglires</taxon>
        <taxon>Glires</taxon>
        <taxon>Rodentia</taxon>
        <taxon>Myomorpha</taxon>
        <taxon>Muroidea</taxon>
        <taxon>Muridae</taxon>
        <taxon>Murinae</taxon>
        <taxon>Mus</taxon>
        <taxon>Mus</taxon>
    </lineage>
</organism>
<protein>
    <recommendedName>
        <fullName>Neuronal pentraxin-2</fullName>
        <shortName>NP2</shortName>
    </recommendedName>
    <alternativeName>
        <fullName>Neuronal pentraxin II</fullName>
        <shortName>NP-II</shortName>
    </alternativeName>
</protein>
<gene>
    <name type="primary">Nptx2</name>
</gene>
<keyword id="KW-0106">Calcium</keyword>
<keyword id="KW-1015">Disulfide bond</keyword>
<keyword id="KW-0325">Glycoprotein</keyword>
<keyword id="KW-0430">Lectin</keyword>
<keyword id="KW-0479">Metal-binding</keyword>
<keyword id="KW-1185">Reference proteome</keyword>
<keyword id="KW-0964">Secreted</keyword>
<keyword id="KW-0732">Signal</keyword>
<feature type="signal peptide" evidence="2">
    <location>
        <begin position="1"/>
        <end position="14"/>
    </location>
</feature>
<feature type="chain" id="PRO_0000023552" description="Neuronal pentraxin-2">
    <location>
        <begin position="15"/>
        <end position="429"/>
    </location>
</feature>
<feature type="domain" description="Pentraxin (PTX)" evidence="3">
    <location>
        <begin position="221"/>
        <end position="422"/>
    </location>
</feature>
<feature type="binding site" evidence="1">
    <location>
        <position position="275"/>
    </location>
    <ligand>
        <name>Ca(2+)</name>
        <dbReference type="ChEBI" id="CHEBI:29108"/>
        <label>1</label>
    </ligand>
</feature>
<feature type="binding site" evidence="1">
    <location>
        <position position="353"/>
    </location>
    <ligand>
        <name>Ca(2+)</name>
        <dbReference type="ChEBI" id="CHEBI:29108"/>
        <label>1</label>
    </ligand>
</feature>
<feature type="binding site" evidence="3">
    <location>
        <position position="353"/>
    </location>
    <ligand>
        <name>Ca(2+)</name>
        <dbReference type="ChEBI" id="CHEBI:29108"/>
        <label>2</label>
    </ligand>
</feature>
<feature type="binding site" evidence="1">
    <location>
        <position position="354"/>
    </location>
    <ligand>
        <name>Ca(2+)</name>
        <dbReference type="ChEBI" id="CHEBI:29108"/>
        <label>1</label>
    </ligand>
</feature>
<feature type="binding site" evidence="1">
    <location>
        <position position="355"/>
    </location>
    <ligand>
        <name>Ca(2+)</name>
        <dbReference type="ChEBI" id="CHEBI:29108"/>
        <label>1</label>
    </ligand>
</feature>
<feature type="binding site" evidence="3">
    <location>
        <position position="355"/>
    </location>
    <ligand>
        <name>Ca(2+)</name>
        <dbReference type="ChEBI" id="CHEBI:29108"/>
        <label>2</label>
    </ligand>
</feature>
<feature type="binding site" evidence="3">
    <location>
        <position position="365"/>
    </location>
    <ligand>
        <name>Ca(2+)</name>
        <dbReference type="ChEBI" id="CHEBI:29108"/>
        <label>2</label>
    </ligand>
</feature>
<feature type="glycosylation site" description="N-linked (GlcNAc...) asparagine" evidence="2">
    <location>
        <position position="146"/>
    </location>
</feature>
<feature type="glycosylation site" description="N-linked (GlcNAc...) asparagine" evidence="2">
    <location>
        <position position="187"/>
    </location>
</feature>
<feature type="glycosylation site" description="N-linked (GlcNAc...) asparagine" evidence="2">
    <location>
        <position position="391"/>
    </location>
</feature>
<feature type="disulfide bond" evidence="3">
    <location>
        <begin position="251"/>
        <end position="311"/>
    </location>
</feature>
<name>NPTX2_MOUSE</name>
<dbReference type="EMBL" id="AF049124">
    <property type="protein sequence ID" value="AAC05131.1"/>
    <property type="molecule type" value="mRNA"/>
</dbReference>
<dbReference type="EMBL" id="AF318618">
    <property type="protein sequence ID" value="AAK06745.1"/>
    <property type="molecule type" value="Genomic_DNA"/>
</dbReference>
<dbReference type="EMBL" id="BC026054">
    <property type="protein sequence ID" value="AAH26054.1"/>
    <property type="molecule type" value="mRNA"/>
</dbReference>
<dbReference type="CCDS" id="CCDS19849.1"/>
<dbReference type="RefSeq" id="NP_058069.1">
    <property type="nucleotide sequence ID" value="NM_016789.3"/>
</dbReference>
<dbReference type="SMR" id="O70340"/>
<dbReference type="BioGRID" id="207287">
    <property type="interactions" value="1"/>
</dbReference>
<dbReference type="FunCoup" id="O70340">
    <property type="interactions" value="69"/>
</dbReference>
<dbReference type="IntAct" id="O70340">
    <property type="interactions" value="3"/>
</dbReference>
<dbReference type="MINT" id="O70340"/>
<dbReference type="STRING" id="10090.ENSMUSP00000071687"/>
<dbReference type="GlyConnect" id="2553">
    <property type="glycosylation" value="2 N-Linked glycans (2 sites)"/>
</dbReference>
<dbReference type="GlyCosmos" id="O70340">
    <property type="glycosylation" value="3 sites, 2 glycans"/>
</dbReference>
<dbReference type="GlyGen" id="O70340">
    <property type="glycosylation" value="4 sites, 4 N-linked glycans (2 sites), 1 O-linked glycan (1 site)"/>
</dbReference>
<dbReference type="iPTMnet" id="O70340"/>
<dbReference type="PhosphoSitePlus" id="O70340"/>
<dbReference type="PaxDb" id="10090-ENSMUSP00000071687"/>
<dbReference type="ProteomicsDB" id="293962"/>
<dbReference type="Antibodypedia" id="30245">
    <property type="antibodies" value="223 antibodies from 34 providers"/>
</dbReference>
<dbReference type="DNASU" id="53324"/>
<dbReference type="Ensembl" id="ENSMUST00000071782.8">
    <property type="protein sequence ID" value="ENSMUSP00000071687.7"/>
    <property type="gene ID" value="ENSMUSG00000059991.8"/>
</dbReference>
<dbReference type="GeneID" id="53324"/>
<dbReference type="KEGG" id="mmu:53324"/>
<dbReference type="UCSC" id="uc012egq.1">
    <property type="organism name" value="mouse"/>
</dbReference>
<dbReference type="AGR" id="MGI:1858209"/>
<dbReference type="CTD" id="4885"/>
<dbReference type="MGI" id="MGI:1858209">
    <property type="gene designation" value="Nptx2"/>
</dbReference>
<dbReference type="VEuPathDB" id="HostDB:ENSMUSG00000059991"/>
<dbReference type="eggNOG" id="ENOG502QV29">
    <property type="taxonomic scope" value="Eukaryota"/>
</dbReference>
<dbReference type="GeneTree" id="ENSGT01060000248591"/>
<dbReference type="HOGENOM" id="CLU_032051_0_0_1"/>
<dbReference type="InParanoid" id="O70340"/>
<dbReference type="OMA" id="AWKNEVG"/>
<dbReference type="OrthoDB" id="8871962at2759"/>
<dbReference type="PhylomeDB" id="O70340"/>
<dbReference type="TreeFam" id="TF330208"/>
<dbReference type="BioGRID-ORCS" id="53324">
    <property type="hits" value="3 hits in 78 CRISPR screens"/>
</dbReference>
<dbReference type="PRO" id="PR:O70340"/>
<dbReference type="Proteomes" id="UP000000589">
    <property type="component" value="Chromosome 5"/>
</dbReference>
<dbReference type="RNAct" id="O70340">
    <property type="molecule type" value="protein"/>
</dbReference>
<dbReference type="Bgee" id="ENSMUSG00000059991">
    <property type="expression patterns" value="Expressed in lumbar dorsal root ganglion and 85 other cell types or tissues"/>
</dbReference>
<dbReference type="GO" id="GO:0005576">
    <property type="term" value="C:extracellular region"/>
    <property type="evidence" value="ECO:0007669"/>
    <property type="project" value="UniProtKB-SubCell"/>
</dbReference>
<dbReference type="GO" id="GO:0098978">
    <property type="term" value="C:glutamatergic synapse"/>
    <property type="evidence" value="ECO:0007669"/>
    <property type="project" value="Ensembl"/>
</dbReference>
<dbReference type="GO" id="GO:0098793">
    <property type="term" value="C:presynapse"/>
    <property type="evidence" value="ECO:0000314"/>
    <property type="project" value="SynGO"/>
</dbReference>
<dbReference type="GO" id="GO:0045202">
    <property type="term" value="C:synapse"/>
    <property type="evidence" value="ECO:0000314"/>
    <property type="project" value="SynGO"/>
</dbReference>
<dbReference type="GO" id="GO:0030246">
    <property type="term" value="F:carbohydrate binding"/>
    <property type="evidence" value="ECO:0007669"/>
    <property type="project" value="UniProtKB-KW"/>
</dbReference>
<dbReference type="GO" id="GO:0046872">
    <property type="term" value="F:metal ion binding"/>
    <property type="evidence" value="ECO:0007669"/>
    <property type="project" value="UniProtKB-KW"/>
</dbReference>
<dbReference type="GO" id="GO:0008306">
    <property type="term" value="P:associative learning"/>
    <property type="evidence" value="ECO:0000315"/>
    <property type="project" value="MGI"/>
</dbReference>
<dbReference type="CDD" id="cd00152">
    <property type="entry name" value="PTX"/>
    <property type="match status" value="1"/>
</dbReference>
<dbReference type="FunFam" id="2.60.120.200:FF:000012">
    <property type="entry name" value="neuronal pentraxin receptor"/>
    <property type="match status" value="1"/>
</dbReference>
<dbReference type="Gene3D" id="2.60.120.200">
    <property type="match status" value="1"/>
</dbReference>
<dbReference type="InterPro" id="IPR013320">
    <property type="entry name" value="ConA-like_dom_sf"/>
</dbReference>
<dbReference type="InterPro" id="IPR051360">
    <property type="entry name" value="Neuronal_Pentraxin_Related"/>
</dbReference>
<dbReference type="InterPro" id="IPR030476">
    <property type="entry name" value="Pentaxin_CS"/>
</dbReference>
<dbReference type="InterPro" id="IPR001759">
    <property type="entry name" value="Pentraxin-related"/>
</dbReference>
<dbReference type="PANTHER" id="PTHR19277:SF1">
    <property type="entry name" value="NEURONAL PENTRAXIN-2"/>
    <property type="match status" value="1"/>
</dbReference>
<dbReference type="PANTHER" id="PTHR19277">
    <property type="entry name" value="PENTRAXIN"/>
    <property type="match status" value="1"/>
</dbReference>
<dbReference type="Pfam" id="PF00354">
    <property type="entry name" value="Pentaxin"/>
    <property type="match status" value="1"/>
</dbReference>
<dbReference type="PRINTS" id="PR00895">
    <property type="entry name" value="PENTAXIN"/>
</dbReference>
<dbReference type="SMART" id="SM00159">
    <property type="entry name" value="PTX"/>
    <property type="match status" value="1"/>
</dbReference>
<dbReference type="SUPFAM" id="SSF49899">
    <property type="entry name" value="Concanavalin A-like lectins/glucanases"/>
    <property type="match status" value="1"/>
</dbReference>
<dbReference type="PROSITE" id="PS00289">
    <property type="entry name" value="PTX_1"/>
    <property type="match status" value="1"/>
</dbReference>
<dbReference type="PROSITE" id="PS51828">
    <property type="entry name" value="PTX_2"/>
    <property type="match status" value="1"/>
</dbReference>